<feature type="signal peptide" evidence="1">
    <location>
        <begin position="1"/>
        <end position="23"/>
    </location>
</feature>
<feature type="chain" id="PRO_0000406828" description="Envelope glycoprotein C">
    <location>
        <begin position="24"/>
        <end position="462"/>
    </location>
</feature>
<feature type="topological domain" description="Virion surface" evidence="1">
    <location>
        <begin position="24"/>
        <end position="433"/>
    </location>
</feature>
<feature type="transmembrane region" description="Helical" evidence="1">
    <location>
        <begin position="434"/>
        <end position="454"/>
    </location>
</feature>
<feature type="topological domain" description="Cytoplasmic" evidence="1">
    <location>
        <begin position="455"/>
        <end position="462"/>
    </location>
</feature>
<feature type="region of interest" description="Disordered" evidence="2">
    <location>
        <begin position="29"/>
        <end position="57"/>
    </location>
</feature>
<feature type="compositionally biased region" description="Low complexity" evidence="2">
    <location>
        <begin position="29"/>
        <end position="38"/>
    </location>
</feature>
<feature type="compositionally biased region" description="Polar residues" evidence="2">
    <location>
        <begin position="39"/>
        <end position="57"/>
    </location>
</feature>
<feature type="glycosylation site" description="N-linked (GlcNAc...) asparagine; by host" evidence="1">
    <location>
        <position position="66"/>
    </location>
</feature>
<feature type="glycosylation site" description="N-linked (GlcNAc...) asparagine; by host" evidence="1">
    <location>
        <position position="94"/>
    </location>
</feature>
<feature type="glycosylation site" description="N-linked (GlcNAc...) asparagine; by host" evidence="1">
    <location>
        <position position="136"/>
    </location>
</feature>
<feature type="glycosylation site" description="N-linked (GlcNAc...) asparagine; by host" evidence="1">
    <location>
        <position position="173"/>
    </location>
</feature>
<feature type="glycosylation site" description="N-linked (GlcNAc...) asparagine; by host" evidence="1">
    <location>
        <position position="249"/>
    </location>
</feature>
<feature type="glycosylation site" description="N-linked (GlcNAc...) asparagine; by host" evidence="1">
    <location>
        <position position="417"/>
    </location>
</feature>
<proteinExistence type="inferred from homology"/>
<reference key="1">
    <citation type="journal article" date="2006" name="J. Virol.">
        <title>Psittacid herpesvirus 1 and infectious laryngotracheitis virus: Comparative genome sequence analysis of two avian alphaherpesviruses.</title>
        <authorList>
            <person name="Thureen D.R."/>
            <person name="Keeler C.L. Jr."/>
        </authorList>
    </citation>
    <scope>NUCLEOTIDE SEQUENCE [LARGE SCALE GENOMIC DNA]</scope>
</reference>
<accession>Q6UDI7</accession>
<evidence type="ECO:0000255" key="1"/>
<evidence type="ECO:0000256" key="2">
    <source>
        <dbReference type="SAM" id="MobiDB-lite"/>
    </source>
</evidence>
<evidence type="ECO:0000305" key="3"/>
<organism>
    <name type="scientific">Psittacid herpesvirus 1 (isolate Amazon parrot/-/97-0001/1997)</name>
    <name type="common">PsHV-1</name>
    <name type="synonym">Pacheco's disease virus</name>
    <dbReference type="NCBI Taxonomy" id="670426"/>
    <lineage>
        <taxon>Viruses</taxon>
        <taxon>Duplodnaviria</taxon>
        <taxon>Heunggongvirae</taxon>
        <taxon>Peploviricota</taxon>
        <taxon>Herviviricetes</taxon>
        <taxon>Herpesvirales</taxon>
        <taxon>Orthoherpesviridae</taxon>
        <taxon>Alphaherpesvirinae</taxon>
        <taxon>Iltovirus</taxon>
        <taxon>Iltovirus psittacidalpha1</taxon>
        <taxon>Psittacid alphaherpesvirus 1</taxon>
    </lineage>
</organism>
<organismHost>
    <name type="scientific">Amazona oratrix</name>
    <name type="common">yellow-headed parrot</name>
    <dbReference type="NCBI Taxonomy" id="152276"/>
</organismHost>
<keyword id="KW-0325">Glycoprotein</keyword>
<keyword id="KW-0472">Membrane</keyword>
<keyword id="KW-1185">Reference proteome</keyword>
<keyword id="KW-0732">Signal</keyword>
<keyword id="KW-0812">Transmembrane</keyword>
<keyword id="KW-1133">Transmembrane helix</keyword>
<keyword id="KW-0946">Virion</keyword>
<sequence>MAPRGSGRLEAVVFAVMVLFCSGTSTATTAAAPASSPGIQTSSPAPGTGSTRLPGTRASTQQLTMNCSAGGILYSVLGGPFALRCRLSRAPKANETLYAMLAPLPSNTMAAADRPHGSLSHLGNGRAPLSTIYRYNVTAKAGTLDPSAQRSGLAVAIDTESSGDPISFVIYSNMSTRAHIGEYIWRMHDAGGTTADYATIVLLARPPIAAKAPSTNFFLDADVASALVVEASGAYPPSTLTGAWFIDGNRSAESAGFATNVRQIITSDGEVDVKWFLINTKDSPPPSVTPQTTVTFVATWTPPKGFETVFPDGKVTLTKVLRPLWLRKPIVQVSRFPPGYLVCRASDILCDHGDLQWSAGGKIVKSEHQAARTRMHLGSKLCALVQILDIPEDTSLQQSVTYTCTLRGYERIYNWLNGTIELDNMPLRQGRPMLICLAVVMGLFVLGSFLAVVISACLWGSG</sequence>
<dbReference type="EMBL" id="AY372243">
    <property type="protein sequence ID" value="AAQ73723.1"/>
    <property type="molecule type" value="Genomic_DNA"/>
</dbReference>
<dbReference type="RefSeq" id="NP_944417.1">
    <property type="nucleotide sequence ID" value="NC_005264.1"/>
</dbReference>
<dbReference type="GlyCosmos" id="Q6UDI7">
    <property type="glycosylation" value="6 sites, No reported glycans"/>
</dbReference>
<dbReference type="GeneID" id="2656968"/>
<dbReference type="KEGG" id="vg:2656968"/>
<dbReference type="Proteomes" id="UP000006840">
    <property type="component" value="Segment"/>
</dbReference>
<dbReference type="GO" id="GO:0016020">
    <property type="term" value="C:membrane"/>
    <property type="evidence" value="ECO:0007669"/>
    <property type="project" value="UniProtKB-KW"/>
</dbReference>
<dbReference type="GO" id="GO:0055036">
    <property type="term" value="C:virion membrane"/>
    <property type="evidence" value="ECO:0007669"/>
    <property type="project" value="UniProtKB-SubCell"/>
</dbReference>
<dbReference type="InterPro" id="IPR001038">
    <property type="entry name" value="GA_GC"/>
</dbReference>
<dbReference type="Pfam" id="PF02124">
    <property type="entry name" value="Marek_A"/>
    <property type="match status" value="1"/>
</dbReference>
<protein>
    <recommendedName>
        <fullName>Envelope glycoprotein C</fullName>
    </recommendedName>
</protein>
<comment type="subcellular location">
    <subcellularLocation>
        <location evidence="3">Virion membrane</location>
        <topology evidence="3">Single-pass membrane protein</topology>
    </subcellularLocation>
</comment>
<comment type="similarity">
    <text evidence="3">Belongs to the herpesviridae glycoprotein C family.</text>
</comment>
<name>GC_PSHV1</name>
<gene>
    <name type="primary">gC</name>
    <name type="ORF">UL44</name>
</gene>